<accession>P0AAR8</accession>
<accession>P77415</accession>
<accession>Q2MBY4</accession>
<keyword id="KW-1185">Reference proteome</keyword>
<keyword id="KW-0677">Repeat</keyword>
<keyword id="KW-0732">Signal</keyword>
<feature type="signal peptide" evidence="1">
    <location>
        <begin position="1"/>
        <end position="25"/>
    </location>
</feature>
<feature type="chain" id="PRO_0000013793" description="Uncharacterized protein YbaV">
    <location>
        <begin position="26"/>
        <end position="123"/>
    </location>
</feature>
<feature type="domain" description="HhH 1">
    <location>
        <begin position="60"/>
        <end position="90"/>
    </location>
</feature>
<feature type="domain" description="HhH 2">
    <location>
        <begin position="91"/>
        <end position="120"/>
    </location>
</feature>
<feature type="region of interest" description="Disordered" evidence="2">
    <location>
        <begin position="40"/>
        <end position="62"/>
    </location>
</feature>
<feature type="compositionally biased region" description="Low complexity" evidence="2">
    <location>
        <begin position="40"/>
        <end position="53"/>
    </location>
</feature>
<organism>
    <name type="scientific">Escherichia coli (strain K12)</name>
    <dbReference type="NCBI Taxonomy" id="83333"/>
    <lineage>
        <taxon>Bacteria</taxon>
        <taxon>Pseudomonadati</taxon>
        <taxon>Pseudomonadota</taxon>
        <taxon>Gammaproteobacteria</taxon>
        <taxon>Enterobacterales</taxon>
        <taxon>Enterobacteriaceae</taxon>
        <taxon>Escherichia</taxon>
    </lineage>
</organism>
<proteinExistence type="inferred from homology"/>
<dbReference type="EMBL" id="D82943">
    <property type="protein sequence ID" value="BAA11646.1"/>
    <property type="molecule type" value="Genomic_DNA"/>
</dbReference>
<dbReference type="EMBL" id="U82664">
    <property type="protein sequence ID" value="AAB40198.1"/>
    <property type="molecule type" value="Genomic_DNA"/>
</dbReference>
<dbReference type="EMBL" id="U00096">
    <property type="protein sequence ID" value="AAC73545.1"/>
    <property type="molecule type" value="Genomic_DNA"/>
</dbReference>
<dbReference type="EMBL" id="AP009048">
    <property type="protein sequence ID" value="BAE76222.1"/>
    <property type="molecule type" value="Genomic_DNA"/>
</dbReference>
<dbReference type="PIR" id="B64774">
    <property type="entry name" value="B64774"/>
</dbReference>
<dbReference type="RefSeq" id="NP_414976.1">
    <property type="nucleotide sequence ID" value="NC_000913.3"/>
</dbReference>
<dbReference type="RefSeq" id="WP_000680312.1">
    <property type="nucleotide sequence ID" value="NZ_SSZK01000009.1"/>
</dbReference>
<dbReference type="SMR" id="P0AAR8"/>
<dbReference type="BioGRID" id="4262032">
    <property type="interactions" value="65"/>
</dbReference>
<dbReference type="FunCoup" id="P0AAR8">
    <property type="interactions" value="128"/>
</dbReference>
<dbReference type="STRING" id="511145.b0442"/>
<dbReference type="jPOST" id="P0AAR8"/>
<dbReference type="PaxDb" id="511145-b0442"/>
<dbReference type="EnsemblBacteria" id="AAC73545">
    <property type="protein sequence ID" value="AAC73545"/>
    <property type="gene ID" value="b0442"/>
</dbReference>
<dbReference type="GeneID" id="945884"/>
<dbReference type="KEGG" id="ecj:JW0432"/>
<dbReference type="KEGG" id="eco:b0442"/>
<dbReference type="KEGG" id="ecoc:C3026_02165"/>
<dbReference type="PATRIC" id="fig|511145.12.peg.460"/>
<dbReference type="EchoBASE" id="EB3039"/>
<dbReference type="eggNOG" id="COG1555">
    <property type="taxonomic scope" value="Bacteria"/>
</dbReference>
<dbReference type="HOGENOM" id="CLU_052011_3_1_6"/>
<dbReference type="InParanoid" id="P0AAR8"/>
<dbReference type="OMA" id="EANRDMI"/>
<dbReference type="OrthoDB" id="7510573at2"/>
<dbReference type="PhylomeDB" id="P0AAR8"/>
<dbReference type="BioCyc" id="EcoCyc:G6243-MONOMER"/>
<dbReference type="PRO" id="PR:P0AAR8"/>
<dbReference type="Proteomes" id="UP000000625">
    <property type="component" value="Chromosome"/>
</dbReference>
<dbReference type="GO" id="GO:0030288">
    <property type="term" value="C:outer membrane-bounded periplasmic space"/>
    <property type="evidence" value="ECO:0000314"/>
    <property type="project" value="EcoCyc"/>
</dbReference>
<dbReference type="GO" id="GO:0015627">
    <property type="term" value="C:type II protein secretion system complex"/>
    <property type="evidence" value="ECO:0000318"/>
    <property type="project" value="GO_Central"/>
</dbReference>
<dbReference type="GO" id="GO:0003677">
    <property type="term" value="F:DNA binding"/>
    <property type="evidence" value="ECO:0007669"/>
    <property type="project" value="InterPro"/>
</dbReference>
<dbReference type="GO" id="GO:0006281">
    <property type="term" value="P:DNA repair"/>
    <property type="evidence" value="ECO:0007669"/>
    <property type="project" value="InterPro"/>
</dbReference>
<dbReference type="GO" id="GO:0015628">
    <property type="term" value="P:protein secretion by the type II secretion system"/>
    <property type="evidence" value="ECO:0000318"/>
    <property type="project" value="GO_Central"/>
</dbReference>
<dbReference type="FunFam" id="1.10.150.280:FF:000001">
    <property type="entry name" value="Competence protein ComEA helix-hairpin-helix repeat region"/>
    <property type="match status" value="1"/>
</dbReference>
<dbReference type="Gene3D" id="1.10.150.280">
    <property type="entry name" value="AF1531-like domain"/>
    <property type="match status" value="1"/>
</dbReference>
<dbReference type="InterPro" id="IPR004509">
    <property type="entry name" value="Competence_ComEA_HhH"/>
</dbReference>
<dbReference type="InterPro" id="IPR051675">
    <property type="entry name" value="Endo/Exo/Phosphatase_dom_1"/>
</dbReference>
<dbReference type="InterPro" id="IPR003583">
    <property type="entry name" value="Hlx-hairpin-Hlx_DNA-bd_motif"/>
</dbReference>
<dbReference type="InterPro" id="IPR010994">
    <property type="entry name" value="RuvA_2-like"/>
</dbReference>
<dbReference type="NCBIfam" id="TIGR00426">
    <property type="entry name" value="competence protein ComEA helix-hairpin-helix repeat region"/>
    <property type="match status" value="1"/>
</dbReference>
<dbReference type="PANTHER" id="PTHR21180">
    <property type="entry name" value="ENDONUCLEASE/EXONUCLEASE/PHOSPHATASE FAMILY DOMAIN-CONTAINING PROTEIN 1"/>
    <property type="match status" value="1"/>
</dbReference>
<dbReference type="PANTHER" id="PTHR21180:SF32">
    <property type="entry name" value="ENDONUCLEASE_EXONUCLEASE_PHOSPHATASE FAMILY DOMAIN-CONTAINING PROTEIN 1"/>
    <property type="match status" value="1"/>
</dbReference>
<dbReference type="Pfam" id="PF12836">
    <property type="entry name" value="HHH_3"/>
    <property type="match status" value="1"/>
</dbReference>
<dbReference type="SMART" id="SM00278">
    <property type="entry name" value="HhH1"/>
    <property type="match status" value="2"/>
</dbReference>
<dbReference type="SUPFAM" id="SSF47781">
    <property type="entry name" value="RuvA domain 2-like"/>
    <property type="match status" value="1"/>
</dbReference>
<reference key="1">
    <citation type="submission" date="1996-10" db="EMBL/GenBank/DDBJ databases">
        <title>Nucleotide sequence analysis of the E. coli chromosome around the 10.0 min region.</title>
        <authorList>
            <person name="Hatada E."/>
            <person name="Ohmori H."/>
            <person name="Qiao Y."/>
            <person name="Tsuji M."/>
            <person name="Fukuda R."/>
        </authorList>
    </citation>
    <scope>NUCLEOTIDE SEQUENCE [GENOMIC DNA]</scope>
    <source>
        <strain>K12 / W3110 / ATCC 27325 / DSM 5911</strain>
    </source>
</reference>
<reference key="2">
    <citation type="submission" date="1997-01" db="EMBL/GenBank/DDBJ databases">
        <title>Sequence of minutes 4-25 of Escherichia coli.</title>
        <authorList>
            <person name="Chung E."/>
            <person name="Allen E."/>
            <person name="Araujo R."/>
            <person name="Aparicio A.M."/>
            <person name="Davis K."/>
            <person name="Duncan M."/>
            <person name="Federspiel N."/>
            <person name="Hyman R."/>
            <person name="Kalman S."/>
            <person name="Komp C."/>
            <person name="Kurdi O."/>
            <person name="Lew H."/>
            <person name="Lin D."/>
            <person name="Namath A."/>
            <person name="Oefner P."/>
            <person name="Roberts D."/>
            <person name="Schramm S."/>
            <person name="Davis R.W."/>
        </authorList>
    </citation>
    <scope>NUCLEOTIDE SEQUENCE [LARGE SCALE GENOMIC DNA]</scope>
    <source>
        <strain>K12 / MG1655 / ATCC 47076</strain>
    </source>
</reference>
<reference key="3">
    <citation type="journal article" date="1997" name="Science">
        <title>The complete genome sequence of Escherichia coli K-12.</title>
        <authorList>
            <person name="Blattner F.R."/>
            <person name="Plunkett G. III"/>
            <person name="Bloch C.A."/>
            <person name="Perna N.T."/>
            <person name="Burland V."/>
            <person name="Riley M."/>
            <person name="Collado-Vides J."/>
            <person name="Glasner J.D."/>
            <person name="Rode C.K."/>
            <person name="Mayhew G.F."/>
            <person name="Gregor J."/>
            <person name="Davis N.W."/>
            <person name="Kirkpatrick H.A."/>
            <person name="Goeden M.A."/>
            <person name="Rose D.J."/>
            <person name="Mau B."/>
            <person name="Shao Y."/>
        </authorList>
    </citation>
    <scope>NUCLEOTIDE SEQUENCE [LARGE SCALE GENOMIC DNA]</scope>
    <source>
        <strain>K12 / MG1655 / ATCC 47076</strain>
    </source>
</reference>
<reference key="4">
    <citation type="journal article" date="2006" name="Mol. Syst. Biol.">
        <title>Highly accurate genome sequences of Escherichia coli K-12 strains MG1655 and W3110.</title>
        <authorList>
            <person name="Hayashi K."/>
            <person name="Morooka N."/>
            <person name="Yamamoto Y."/>
            <person name="Fujita K."/>
            <person name="Isono K."/>
            <person name="Choi S."/>
            <person name="Ohtsubo E."/>
            <person name="Baba T."/>
            <person name="Wanner B.L."/>
            <person name="Mori H."/>
            <person name="Horiuchi T."/>
        </authorList>
    </citation>
    <scope>NUCLEOTIDE SEQUENCE [LARGE SCALE GENOMIC DNA]</scope>
    <source>
        <strain>K12 / W3110 / ATCC 27325 / DSM 5911</strain>
    </source>
</reference>
<gene>
    <name type="primary">ybaV</name>
    <name type="ordered locus">b0442</name>
    <name type="ordered locus">JW0432</name>
</gene>
<name>YBAV_ECOLI</name>
<evidence type="ECO:0000255" key="1"/>
<evidence type="ECO:0000256" key="2">
    <source>
        <dbReference type="SAM" id="MobiDB-lite"/>
    </source>
</evidence>
<protein>
    <recommendedName>
        <fullName>Uncharacterized protein YbaV</fullName>
    </recommendedName>
</protein>
<sequence length="123" mass="12704">MKHGIKALLITLSLACAGMSHSALAAASVAKPTAVETKAEAPAAQSKAAVPAKASDEEGTRVSINNASAEELARAMNGVGLKKAQAIVSYREEYGPFKTVEDLKQVPGMGNSLVERNLAVLTL</sequence>